<dbReference type="EMBL" id="DP000008">
    <property type="protein sequence ID" value="AAR16261.1"/>
    <property type="molecule type" value="Genomic_DNA"/>
</dbReference>
<dbReference type="RefSeq" id="NP_001013019.1">
    <property type="nucleotide sequence ID" value="NM_001013001.1"/>
</dbReference>
<dbReference type="SMR" id="A4D7S0"/>
<dbReference type="FunCoup" id="A4D7S0">
    <property type="interactions" value="241"/>
</dbReference>
<dbReference type="STRING" id="9913.ENSBTAP00000010650"/>
<dbReference type="GlyCosmos" id="A4D7S0">
    <property type="glycosylation" value="1 site, No reported glycans"/>
</dbReference>
<dbReference type="GlyGen" id="A4D7S0">
    <property type="glycosylation" value="1 site"/>
</dbReference>
<dbReference type="PaxDb" id="9913-ENSBTAP00000010650"/>
<dbReference type="Ensembl" id="ENSBTAT00000010650.5">
    <property type="protein sequence ID" value="ENSBTAP00000010650.3"/>
    <property type="gene ID" value="ENSBTAG00000008097.5"/>
</dbReference>
<dbReference type="GeneID" id="493729"/>
<dbReference type="KEGG" id="bta:493729"/>
<dbReference type="CTD" id="7472"/>
<dbReference type="VEuPathDB" id="HostDB:ENSBTAG00000008097"/>
<dbReference type="VGNC" id="VGNC:36957">
    <property type="gene designation" value="WNT2"/>
</dbReference>
<dbReference type="eggNOG" id="KOG3913">
    <property type="taxonomic scope" value="Eukaryota"/>
</dbReference>
<dbReference type="GeneTree" id="ENSGT00940000159231"/>
<dbReference type="HOGENOM" id="CLU_033039_1_4_1"/>
<dbReference type="InParanoid" id="A4D7S0"/>
<dbReference type="OMA" id="ITRMTKC"/>
<dbReference type="OrthoDB" id="5945655at2759"/>
<dbReference type="TreeFam" id="TF105310"/>
<dbReference type="Reactome" id="R-BTA-3238698">
    <property type="pathway name" value="WNT ligand biogenesis and trafficking"/>
</dbReference>
<dbReference type="Proteomes" id="UP000009136">
    <property type="component" value="Chromosome 4"/>
</dbReference>
<dbReference type="Bgee" id="ENSBTAG00000008097">
    <property type="expression patterns" value="Expressed in fornix of vagina and 51 other cell types or tissues"/>
</dbReference>
<dbReference type="GO" id="GO:0005737">
    <property type="term" value="C:cytoplasm"/>
    <property type="evidence" value="ECO:0007669"/>
    <property type="project" value="Ensembl"/>
</dbReference>
<dbReference type="GO" id="GO:0005615">
    <property type="term" value="C:extracellular space"/>
    <property type="evidence" value="ECO:0000318"/>
    <property type="project" value="GO_Central"/>
</dbReference>
<dbReference type="GO" id="GO:0005125">
    <property type="term" value="F:cytokine activity"/>
    <property type="evidence" value="ECO:0000318"/>
    <property type="project" value="GO_Central"/>
</dbReference>
<dbReference type="GO" id="GO:0005109">
    <property type="term" value="F:frizzled binding"/>
    <property type="evidence" value="ECO:0000318"/>
    <property type="project" value="GO_Central"/>
</dbReference>
<dbReference type="GO" id="GO:0055009">
    <property type="term" value="P:atrial cardiac muscle tissue morphogenesis"/>
    <property type="evidence" value="ECO:0007669"/>
    <property type="project" value="Ensembl"/>
</dbReference>
<dbReference type="GO" id="GO:0060070">
    <property type="term" value="P:canonical Wnt signaling pathway"/>
    <property type="evidence" value="ECO:0000318"/>
    <property type="project" value="GO_Central"/>
</dbReference>
<dbReference type="GO" id="GO:0060317">
    <property type="term" value="P:cardiac epithelial to mesenchymal transition"/>
    <property type="evidence" value="ECO:0007669"/>
    <property type="project" value="Ensembl"/>
</dbReference>
<dbReference type="GO" id="GO:0060038">
    <property type="term" value="P:cardiac muscle cell proliferation"/>
    <property type="evidence" value="ECO:0007669"/>
    <property type="project" value="Ensembl"/>
</dbReference>
<dbReference type="GO" id="GO:0045165">
    <property type="term" value="P:cell fate commitment"/>
    <property type="evidence" value="ECO:0000318"/>
    <property type="project" value="GO_Central"/>
</dbReference>
<dbReference type="GO" id="GO:0033278">
    <property type="term" value="P:cell proliferation in midbrain"/>
    <property type="evidence" value="ECO:0007669"/>
    <property type="project" value="Ensembl"/>
</dbReference>
<dbReference type="GO" id="GO:0007267">
    <property type="term" value="P:cell-cell signaling"/>
    <property type="evidence" value="ECO:0007669"/>
    <property type="project" value="Ensembl"/>
</dbReference>
<dbReference type="GO" id="GO:0071560">
    <property type="term" value="P:cellular response to transforming growth factor beta stimulus"/>
    <property type="evidence" value="ECO:0007669"/>
    <property type="project" value="Ensembl"/>
</dbReference>
<dbReference type="GO" id="GO:0060502">
    <property type="term" value="P:epithelial cell proliferation involved in lung morphogenesis"/>
    <property type="evidence" value="ECO:0007669"/>
    <property type="project" value="Ensembl"/>
</dbReference>
<dbReference type="GO" id="GO:0060716">
    <property type="term" value="P:labyrinthine layer blood vessel development"/>
    <property type="evidence" value="ECO:0007669"/>
    <property type="project" value="Ensembl"/>
</dbReference>
<dbReference type="GO" id="GO:0060492">
    <property type="term" value="P:lung induction"/>
    <property type="evidence" value="ECO:0007669"/>
    <property type="project" value="Ensembl"/>
</dbReference>
<dbReference type="GO" id="GO:0061180">
    <property type="term" value="P:mammary gland epithelium development"/>
    <property type="evidence" value="ECO:0007669"/>
    <property type="project" value="Ensembl"/>
</dbReference>
<dbReference type="GO" id="GO:0010463">
    <property type="term" value="P:mesenchymal cell proliferation"/>
    <property type="evidence" value="ECO:0007669"/>
    <property type="project" value="Ensembl"/>
</dbReference>
<dbReference type="GO" id="GO:1904948">
    <property type="term" value="P:midbrain dopaminergic neuron differentiation"/>
    <property type="evidence" value="ECO:0007669"/>
    <property type="project" value="Ensembl"/>
</dbReference>
<dbReference type="GO" id="GO:0030182">
    <property type="term" value="P:neuron differentiation"/>
    <property type="evidence" value="ECO:0000318"/>
    <property type="project" value="GO_Central"/>
</dbReference>
<dbReference type="GO" id="GO:0060045">
    <property type="term" value="P:positive regulation of cardiac muscle cell proliferation"/>
    <property type="evidence" value="ECO:0007669"/>
    <property type="project" value="Ensembl"/>
</dbReference>
<dbReference type="GO" id="GO:0060501">
    <property type="term" value="P:positive regulation of epithelial cell proliferation involved in lung morphogenesis"/>
    <property type="evidence" value="ECO:0007669"/>
    <property type="project" value="Ensembl"/>
</dbReference>
<dbReference type="GO" id="GO:0048146">
    <property type="term" value="P:positive regulation of fibroblast proliferation"/>
    <property type="evidence" value="ECO:0007669"/>
    <property type="project" value="Ensembl"/>
</dbReference>
<dbReference type="GO" id="GO:0002053">
    <property type="term" value="P:positive regulation of mesenchymal cell proliferation"/>
    <property type="evidence" value="ECO:0007669"/>
    <property type="project" value="Ensembl"/>
</dbReference>
<dbReference type="GO" id="GO:0050769">
    <property type="term" value="P:positive regulation of neurogenesis"/>
    <property type="evidence" value="ECO:0007669"/>
    <property type="project" value="Ensembl"/>
</dbReference>
<dbReference type="GO" id="GO:0045944">
    <property type="term" value="P:positive regulation of transcription by RNA polymerase II"/>
    <property type="evidence" value="ECO:0007669"/>
    <property type="project" value="Ensembl"/>
</dbReference>
<dbReference type="CDD" id="cd19345">
    <property type="entry name" value="Wnt_Wnt2"/>
    <property type="match status" value="1"/>
</dbReference>
<dbReference type="FunFam" id="3.30.2460.20:FF:000001">
    <property type="entry name" value="Wnt homolog"/>
    <property type="match status" value="1"/>
</dbReference>
<dbReference type="Gene3D" id="3.30.2460.20">
    <property type="match status" value="1"/>
</dbReference>
<dbReference type="InterPro" id="IPR005817">
    <property type="entry name" value="Wnt"/>
</dbReference>
<dbReference type="InterPro" id="IPR009140">
    <property type="entry name" value="Wnt2"/>
</dbReference>
<dbReference type="InterPro" id="IPR043158">
    <property type="entry name" value="Wnt_C"/>
</dbReference>
<dbReference type="InterPro" id="IPR018161">
    <property type="entry name" value="Wnt_CS"/>
</dbReference>
<dbReference type="PANTHER" id="PTHR12027:SF86">
    <property type="entry name" value="PROTEIN WNT-2"/>
    <property type="match status" value="1"/>
</dbReference>
<dbReference type="PANTHER" id="PTHR12027">
    <property type="entry name" value="WNT RELATED"/>
    <property type="match status" value="1"/>
</dbReference>
<dbReference type="Pfam" id="PF00110">
    <property type="entry name" value="wnt"/>
    <property type="match status" value="1"/>
</dbReference>
<dbReference type="PRINTS" id="PR01842">
    <property type="entry name" value="WNT2PROTEIN"/>
</dbReference>
<dbReference type="PRINTS" id="PR01349">
    <property type="entry name" value="WNTPROTEIN"/>
</dbReference>
<dbReference type="SMART" id="SM00097">
    <property type="entry name" value="WNT1"/>
    <property type="match status" value="1"/>
</dbReference>
<dbReference type="PROSITE" id="PS00246">
    <property type="entry name" value="WNT1"/>
    <property type="match status" value="1"/>
</dbReference>
<proteinExistence type="inferred from homology"/>
<accession>A4D7S0</accession>
<keyword id="KW-0217">Developmental protein</keyword>
<keyword id="KW-1015">Disulfide bond</keyword>
<keyword id="KW-0272">Extracellular matrix</keyword>
<keyword id="KW-0325">Glycoprotein</keyword>
<keyword id="KW-0449">Lipoprotein</keyword>
<keyword id="KW-1185">Reference proteome</keyword>
<keyword id="KW-0964">Secreted</keyword>
<keyword id="KW-0732">Signal</keyword>
<keyword id="KW-0879">Wnt signaling pathway</keyword>
<name>WNT2_BOVIN</name>
<protein>
    <recommendedName>
        <fullName>Protein Wnt-2</fullName>
    </recommendedName>
</protein>
<comment type="function">
    <text evidence="1 2">Ligand for members of the frizzled family of seven transmembrane receptors. Functions in the canonical Wnt signaling pathway that results in activation of transcription factors of the TCF/LEF family (By similarity). Functions as a upstream regulator of FGF10 expression. Plays an important role in embryonic lung development. May contribute to embryonic brain development by regulating the proliferation of dopaminergic precursors and neurons (By similarity).</text>
</comment>
<comment type="subcellular location">
    <subcellularLocation>
        <location evidence="1">Secreted</location>
        <location evidence="1">Extracellular space</location>
        <location evidence="1">Extracellular matrix</location>
    </subcellularLocation>
    <subcellularLocation>
        <location evidence="1">Secreted</location>
    </subcellularLocation>
</comment>
<comment type="PTM">
    <text evidence="1">Palmitoleoylation is required for efficient binding to frizzled receptors. Depalmitoleoylation leads to Wnt signaling pathway inhibition.</text>
</comment>
<comment type="similarity">
    <text evidence="6">Belongs to the Wnt family.</text>
</comment>
<reference key="1">
    <citation type="journal article" date="2003" name="Nature">
        <title>Comparative analyses of multi-species sequences from targeted genomic regions.</title>
        <authorList>
            <person name="Thomas J.W."/>
            <person name="Touchman J.W."/>
            <person name="Blakesley R.W."/>
            <person name="Bouffard G.G."/>
            <person name="Beckstrom-Sternberg S.M."/>
            <person name="Margulies E.H."/>
            <person name="Blanchette M."/>
            <person name="Siepel A.C."/>
            <person name="Thomas P.J."/>
            <person name="McDowell J.C."/>
            <person name="Maskeri B."/>
            <person name="Hansen N.F."/>
            <person name="Schwartz M.S."/>
            <person name="Weber R.J."/>
            <person name="Kent W.J."/>
            <person name="Karolchik D."/>
            <person name="Bruen T.C."/>
            <person name="Bevan R."/>
            <person name="Cutler D.J."/>
            <person name="Schwartz S."/>
            <person name="Elnitski L."/>
            <person name="Idol J.R."/>
            <person name="Prasad A.B."/>
            <person name="Lee-Lin S.-Q."/>
            <person name="Maduro V.V.B."/>
            <person name="Summers T.J."/>
            <person name="Portnoy M.E."/>
            <person name="Dietrich N.L."/>
            <person name="Akhter N."/>
            <person name="Ayele K."/>
            <person name="Benjamin B."/>
            <person name="Cariaga K."/>
            <person name="Brinkley C.P."/>
            <person name="Brooks S.Y."/>
            <person name="Granite S."/>
            <person name="Guan X."/>
            <person name="Gupta J."/>
            <person name="Haghighi P."/>
            <person name="Ho S.-L."/>
            <person name="Huang M.C."/>
            <person name="Karlins E."/>
            <person name="Laric P.L."/>
            <person name="Legaspi R."/>
            <person name="Lim M.J."/>
            <person name="Maduro Q.L."/>
            <person name="Masiello C.A."/>
            <person name="Mastrian S.D."/>
            <person name="McCloskey J.C."/>
            <person name="Pearson R."/>
            <person name="Stantripop S."/>
            <person name="Tiongson E.E."/>
            <person name="Tran J.T."/>
            <person name="Tsurgeon C."/>
            <person name="Vogt J.L."/>
            <person name="Walker M.A."/>
            <person name="Wetherby K.D."/>
            <person name="Wiggins L.S."/>
            <person name="Young A.C."/>
            <person name="Zhang L.-H."/>
            <person name="Osoegawa K."/>
            <person name="Zhu B."/>
            <person name="Zhao B."/>
            <person name="Shu C.L."/>
            <person name="De Jong P.J."/>
            <person name="Lawrence C.E."/>
            <person name="Smit A.F."/>
            <person name="Chakravarti A."/>
            <person name="Haussler D."/>
            <person name="Green P."/>
            <person name="Miller W."/>
            <person name="Green E.D."/>
        </authorList>
    </citation>
    <scope>NUCLEOTIDE SEQUENCE [LARGE SCALE GENOMIC DNA]</scope>
</reference>
<organism>
    <name type="scientific">Bos taurus</name>
    <name type="common">Bovine</name>
    <dbReference type="NCBI Taxonomy" id="9913"/>
    <lineage>
        <taxon>Eukaryota</taxon>
        <taxon>Metazoa</taxon>
        <taxon>Chordata</taxon>
        <taxon>Craniata</taxon>
        <taxon>Vertebrata</taxon>
        <taxon>Euteleostomi</taxon>
        <taxon>Mammalia</taxon>
        <taxon>Eutheria</taxon>
        <taxon>Laurasiatheria</taxon>
        <taxon>Artiodactyla</taxon>
        <taxon>Ruminantia</taxon>
        <taxon>Pecora</taxon>
        <taxon>Bovidae</taxon>
        <taxon>Bovinae</taxon>
        <taxon>Bos</taxon>
    </lineage>
</organism>
<gene>
    <name type="primary">WNT2</name>
</gene>
<evidence type="ECO:0000250" key="1">
    <source>
        <dbReference type="UniProtKB" id="P09544"/>
    </source>
</evidence>
<evidence type="ECO:0000250" key="2">
    <source>
        <dbReference type="UniProtKB" id="P21552"/>
    </source>
</evidence>
<evidence type="ECO:0000250" key="3">
    <source>
        <dbReference type="UniProtKB" id="P28026"/>
    </source>
</evidence>
<evidence type="ECO:0000250" key="4">
    <source>
        <dbReference type="UniProtKB" id="P56704"/>
    </source>
</evidence>
<evidence type="ECO:0000255" key="5"/>
<evidence type="ECO:0000305" key="6"/>
<feature type="signal peptide" evidence="5">
    <location>
        <begin position="1"/>
        <end position="25"/>
    </location>
</feature>
<feature type="chain" id="PRO_0000284947" description="Protein Wnt-2">
    <location>
        <begin position="26"/>
        <end position="360"/>
    </location>
</feature>
<feature type="lipid moiety-binding region" description="O-palmitoleoyl serine; by PORCN" evidence="4">
    <location>
        <position position="212"/>
    </location>
</feature>
<feature type="glycosylation site" description="N-linked (GlcNAc...) asparagine" evidence="5">
    <location>
        <position position="295"/>
    </location>
</feature>
<feature type="disulfide bond" evidence="3">
    <location>
        <begin position="76"/>
        <end position="87"/>
    </location>
</feature>
<feature type="disulfide bond" evidence="3">
    <location>
        <begin position="127"/>
        <end position="135"/>
    </location>
</feature>
<feature type="disulfide bond" evidence="3">
    <location>
        <begin position="137"/>
        <end position="157"/>
    </location>
</feature>
<feature type="disulfide bond" evidence="3">
    <location>
        <begin position="206"/>
        <end position="220"/>
    </location>
</feature>
<feature type="disulfide bond" evidence="3">
    <location>
        <begin position="208"/>
        <end position="215"/>
    </location>
</feature>
<feature type="disulfide bond" evidence="3">
    <location>
        <begin position="278"/>
        <end position="309"/>
    </location>
</feature>
<feature type="disulfide bond" evidence="3">
    <location>
        <begin position="294"/>
        <end position="304"/>
    </location>
</feature>
<feature type="disulfide bond" evidence="3">
    <location>
        <begin position="308"/>
        <end position="348"/>
    </location>
</feature>
<feature type="disulfide bond" evidence="3">
    <location>
        <begin position="324"/>
        <end position="339"/>
    </location>
</feature>
<feature type="disulfide bond" evidence="3">
    <location>
        <begin position="326"/>
        <end position="336"/>
    </location>
</feature>
<feature type="disulfide bond" evidence="3">
    <location>
        <begin position="331"/>
        <end position="332"/>
    </location>
</feature>
<sequence length="360" mass="40643">MNACLVGIWLWLPLLFTWLSPEVSSSWWYMRATSGSSRVMCDNVPGLVSHQRQLCHRHPDVMRAIGLGVTEWTMECQHQFRQHRWNCNTLDRDHSLFGRVLLRSSRESAFVYAISSAGVVFAITRACSQGELKSCSCDPKKKGTAKDNKGTFDWGGCSDNIDYGIKFARAFVDAKERKGKDARALMNLHNNRAGRKAVKRFLKQECKCHGVSGSCTLRTCWLAMADFRKTGNYLWRKYNGAIQVVMNQDGTGFTVANKRFKKPTKNDLVYFENSPDYCIRDRDAGSLGTAGRVCNLTSRGMDSCEVMCCGRGYDTSHITRKTKCECKFHWCCAVRCQDCVEALDVHTCKAPKSPDWAAPT</sequence>